<name>CTO1_YEAST</name>
<protein>
    <recommendedName>
        <fullName evidence="2">Cold tolerance protein 1</fullName>
    </recommendedName>
</protein>
<accession>P25616</accession>
<accession>D6VR23</accession>
<accession>Q8NIM3</accession>
<proteinExistence type="inferred from homology"/>
<gene>
    <name evidence="2" type="primary">CTO1</name>
    <name type="ordered locus">YCR015C</name>
    <name type="ORF">YCR15C</name>
</gene>
<evidence type="ECO:0000269" key="1">
    <source>
    </source>
</evidence>
<evidence type="ECO:0000303" key="2">
    <source>
    </source>
</evidence>
<evidence type="ECO:0000305" key="3"/>
<keyword id="KW-1185">Reference proteome</keyword>
<reference key="1">
    <citation type="journal article" date="1992" name="Nature">
        <title>The complete DNA sequence of yeast chromosome III.</title>
        <authorList>
            <person name="Oliver S.G."/>
            <person name="van der Aart Q.J.M."/>
            <person name="Agostoni-Carbone M.L."/>
            <person name="Aigle M."/>
            <person name="Alberghina L."/>
            <person name="Alexandraki D."/>
            <person name="Antoine G."/>
            <person name="Anwar R."/>
            <person name="Ballesta J.P.G."/>
            <person name="Benit P."/>
            <person name="Berben G."/>
            <person name="Bergantino E."/>
            <person name="Biteau N."/>
            <person name="Bolle P.-A."/>
            <person name="Bolotin-Fukuhara M."/>
            <person name="Brown A."/>
            <person name="Brown A.J.P."/>
            <person name="Buhler J.-M."/>
            <person name="Carcano C."/>
            <person name="Carignani G."/>
            <person name="Cederberg H."/>
            <person name="Chanet R."/>
            <person name="Contreras R."/>
            <person name="Crouzet M."/>
            <person name="Daignan-Fornier B."/>
            <person name="Defoor E."/>
            <person name="Delgado M.D."/>
            <person name="Demolder J."/>
            <person name="Doira C."/>
            <person name="Dubois E."/>
            <person name="Dujon B."/>
            <person name="Duesterhoeft A."/>
            <person name="Erdmann D."/>
            <person name="Esteban M."/>
            <person name="Fabre F."/>
            <person name="Fairhead C."/>
            <person name="Faye G."/>
            <person name="Feldmann H."/>
            <person name="Fiers W."/>
            <person name="Francingues-Gaillard M.-C."/>
            <person name="Franco L."/>
            <person name="Frontali L."/>
            <person name="Fukuhara H."/>
            <person name="Fuller L.J."/>
            <person name="Galland P."/>
            <person name="Gent M.E."/>
            <person name="Gigot D."/>
            <person name="Gilliquet V."/>
            <person name="Glansdorff N."/>
            <person name="Goffeau A."/>
            <person name="Grenson M."/>
            <person name="Grisanti P."/>
            <person name="Grivell L.A."/>
            <person name="de Haan M."/>
            <person name="Haasemann M."/>
            <person name="Hatat D."/>
            <person name="Hoenicka J."/>
            <person name="Hegemann J.H."/>
            <person name="Herbert C.J."/>
            <person name="Hilger F."/>
            <person name="Hohmann S."/>
            <person name="Hollenberg C.P."/>
            <person name="Huse K."/>
            <person name="Iborra F."/>
            <person name="Indge K.J."/>
            <person name="Isono K."/>
            <person name="Jacq C."/>
            <person name="Jacquet M."/>
            <person name="James C.M."/>
            <person name="Jauniaux J.-C."/>
            <person name="Jia Y."/>
            <person name="Jimenez A."/>
            <person name="Kelly A."/>
            <person name="Kleinhans U."/>
            <person name="Kreisl P."/>
            <person name="Lanfranchi G."/>
            <person name="Lewis C."/>
            <person name="van der Linden C.G."/>
            <person name="Lucchini G."/>
            <person name="Lutzenkirchen K."/>
            <person name="Maat M.J."/>
            <person name="Mallet L."/>
            <person name="Mannhaupt G."/>
            <person name="Martegani E."/>
            <person name="Mathieu A."/>
            <person name="Maurer C.T.C."/>
            <person name="McConnell D."/>
            <person name="McKee R.A."/>
            <person name="Messenguy F."/>
            <person name="Mewes H.-W."/>
            <person name="Molemans F."/>
            <person name="Montague M.A."/>
            <person name="Muzi Falconi M."/>
            <person name="Navas L."/>
            <person name="Newlon C.S."/>
            <person name="Noone D."/>
            <person name="Pallier C."/>
            <person name="Panzeri L."/>
            <person name="Pearson B.M."/>
            <person name="Perea J."/>
            <person name="Philippsen P."/>
            <person name="Pierard A."/>
            <person name="Planta R.J."/>
            <person name="Plevani P."/>
            <person name="Poetsch B."/>
            <person name="Pohl F.M."/>
            <person name="Purnelle B."/>
            <person name="Ramezani Rad M."/>
            <person name="Rasmussen S.W."/>
            <person name="Raynal A."/>
            <person name="Remacha M.A."/>
            <person name="Richterich P."/>
            <person name="Roberts A.B."/>
            <person name="Rodriguez F."/>
            <person name="Sanz E."/>
            <person name="Schaaff-Gerstenschlaeger I."/>
            <person name="Scherens B."/>
            <person name="Schweitzer B."/>
            <person name="Shu Y."/>
            <person name="Skala J."/>
            <person name="Slonimski P.P."/>
            <person name="Sor F."/>
            <person name="Soustelle C."/>
            <person name="Spiegelberg R."/>
            <person name="Stateva L.I."/>
            <person name="Steensma H.Y."/>
            <person name="Steiner S."/>
            <person name="Thierry A."/>
            <person name="Thireos G."/>
            <person name="Tzermia M."/>
            <person name="Urrestarazu L.A."/>
            <person name="Valle G."/>
            <person name="Vetter I."/>
            <person name="van Vliet-Reedijk J.C."/>
            <person name="Voet M."/>
            <person name="Volckaert G."/>
            <person name="Vreken P."/>
            <person name="Wang H."/>
            <person name="Warmington J.R."/>
            <person name="von Wettstein D."/>
            <person name="Wicksteed B.L."/>
            <person name="Wilson C."/>
            <person name="Wurst H."/>
            <person name="Xu G."/>
            <person name="Yoshikawa A."/>
            <person name="Zimmermann F.K."/>
            <person name="Sgouros J.G."/>
        </authorList>
    </citation>
    <scope>NUCLEOTIDE SEQUENCE [LARGE SCALE GENOMIC DNA]</scope>
    <source>
        <strain>ATCC 204508 / S288c</strain>
    </source>
</reference>
<reference key="2">
    <citation type="submission" date="2001-06" db="EMBL/GenBank/DDBJ databases">
        <authorList>
            <person name="Valles G."/>
            <person name="Volckaerts G."/>
        </authorList>
    </citation>
    <scope>SEQUENCE REVISION TO 124</scope>
</reference>
<reference key="3">
    <citation type="journal article" date="2014" name="G3 (Bethesda)">
        <title>The reference genome sequence of Saccharomyces cerevisiae: Then and now.</title>
        <authorList>
            <person name="Engel S.R."/>
            <person name="Dietrich F.S."/>
            <person name="Fisk D.G."/>
            <person name="Binkley G."/>
            <person name="Balakrishnan R."/>
            <person name="Costanzo M.C."/>
            <person name="Dwight S.S."/>
            <person name="Hitz B.C."/>
            <person name="Karra K."/>
            <person name="Nash R.S."/>
            <person name="Weng S."/>
            <person name="Wong E.D."/>
            <person name="Lloyd P."/>
            <person name="Skrzypek M.S."/>
            <person name="Miyasato S.R."/>
            <person name="Simison M."/>
            <person name="Cherry J.M."/>
        </authorList>
    </citation>
    <scope>GENOME REANNOTATION</scope>
    <source>
        <strain>ATCC 204508 / S288c</strain>
    </source>
</reference>
<reference key="4">
    <citation type="journal article" date="2015" name="FEMS Yeast Res.">
        <title>Uptake of inorganic phosphate is a limiting factor for Saccharomyces cerevisiae during growth at low temperatures.</title>
        <authorList>
            <person name="Vicent I."/>
            <person name="Navarro A."/>
            <person name="Mulet J.M."/>
            <person name="Sharma S."/>
            <person name="Serrano R."/>
        </authorList>
    </citation>
    <scope>FUNCTION</scope>
</reference>
<sequence>MKTIIISDFDETITRVDTICTIAKLPYLLNPRLKPEWGHFTKTYMDGYHKYKYNGTRSLPLLSSGVPTIISQSNFNKLFADELKYQNHNRVVELNSVNEITKQQIFKSISLDQMKTFARDQNHEDCLLRDGFKTFCSSVVKNFESDFYVLSINWSKEFIHEVIGDRRLKNSHIFCNDLKKVSDKCSQSYNGEFDCRLLTGSDKVKILGEILDKIDSGCNKEGNSCSYWYIGDSETDLLSILHPSTNGVLLINPQENPSKFIKITEKIIGIPKDKISSFEADNGPAWLQFCEKEGGKGAYLVKSWDSLKDLIMQVTKM</sequence>
<organism>
    <name type="scientific">Saccharomyces cerevisiae (strain ATCC 204508 / S288c)</name>
    <name type="common">Baker's yeast</name>
    <dbReference type="NCBI Taxonomy" id="559292"/>
    <lineage>
        <taxon>Eukaryota</taxon>
        <taxon>Fungi</taxon>
        <taxon>Dikarya</taxon>
        <taxon>Ascomycota</taxon>
        <taxon>Saccharomycotina</taxon>
        <taxon>Saccharomycetes</taxon>
        <taxon>Saccharomycetales</taxon>
        <taxon>Saccharomycetaceae</taxon>
        <taxon>Saccharomyces</taxon>
    </lineage>
</organism>
<comment type="function">
    <text evidence="1">Protein required for cold tolerance (PubMed:25725023). Plays a role in the regulation of phosphate uptake (PubMed:25725023).</text>
</comment>
<comment type="similarity">
    <text evidence="3">Belongs to the CTO1 family.</text>
</comment>
<dbReference type="EMBL" id="X59720">
    <property type="protein sequence ID" value="CAC42970.1"/>
    <property type="molecule type" value="Genomic_DNA"/>
</dbReference>
<dbReference type="EMBL" id="BK006937">
    <property type="protein sequence ID" value="DAA07492.1"/>
    <property type="molecule type" value="Genomic_DNA"/>
</dbReference>
<dbReference type="PIR" id="S19425">
    <property type="entry name" value="S19425"/>
</dbReference>
<dbReference type="RefSeq" id="NP_009941.2">
    <property type="nucleotide sequence ID" value="NM_001178728.1"/>
</dbReference>
<dbReference type="BioGRID" id="30993">
    <property type="interactions" value="78"/>
</dbReference>
<dbReference type="DIP" id="DIP-6719N"/>
<dbReference type="FunCoup" id="P25616">
    <property type="interactions" value="36"/>
</dbReference>
<dbReference type="IntAct" id="P25616">
    <property type="interactions" value="1"/>
</dbReference>
<dbReference type="STRING" id="4932.YCR015C"/>
<dbReference type="iPTMnet" id="P25616"/>
<dbReference type="PaxDb" id="4932-YCR015C"/>
<dbReference type="PeptideAtlas" id="P25616"/>
<dbReference type="EnsemblFungi" id="YCR015C_mRNA">
    <property type="protein sequence ID" value="YCR015C"/>
    <property type="gene ID" value="YCR015C"/>
</dbReference>
<dbReference type="GeneID" id="850373"/>
<dbReference type="KEGG" id="sce:YCR015C"/>
<dbReference type="AGR" id="SGD:S000000608"/>
<dbReference type="SGD" id="S000000608">
    <property type="gene designation" value="CTO1"/>
</dbReference>
<dbReference type="VEuPathDB" id="FungiDB:YCR015C"/>
<dbReference type="eggNOG" id="ENOG502S7B4">
    <property type="taxonomic scope" value="Eukaryota"/>
</dbReference>
<dbReference type="HOGENOM" id="CLU_056574_0_0_1"/>
<dbReference type="InParanoid" id="P25616"/>
<dbReference type="OMA" id="STTDMEC"/>
<dbReference type="OrthoDB" id="10255128at2759"/>
<dbReference type="BioCyc" id="YEAST:G3O-29330-MONOMER"/>
<dbReference type="BioGRID-ORCS" id="850373">
    <property type="hits" value="0 hits in 10 CRISPR screens"/>
</dbReference>
<dbReference type="PRO" id="PR:P25616"/>
<dbReference type="Proteomes" id="UP000002311">
    <property type="component" value="Chromosome III"/>
</dbReference>
<dbReference type="RNAct" id="P25616">
    <property type="molecule type" value="protein"/>
</dbReference>
<dbReference type="GO" id="GO:0042131">
    <property type="term" value="F:thiamine phosphate phosphatase activity"/>
    <property type="evidence" value="ECO:0000314"/>
    <property type="project" value="SGD"/>
</dbReference>
<dbReference type="GO" id="GO:0006817">
    <property type="term" value="P:phosphate ion transport"/>
    <property type="evidence" value="ECO:0000315"/>
    <property type="project" value="SGD"/>
</dbReference>
<dbReference type="Gene3D" id="3.40.50.1000">
    <property type="entry name" value="HAD superfamily/HAD-like"/>
    <property type="match status" value="1"/>
</dbReference>
<dbReference type="InterPro" id="IPR050849">
    <property type="entry name" value="HAD-like_hydrolase_phosphatase"/>
</dbReference>
<dbReference type="InterPro" id="IPR036412">
    <property type="entry name" value="HAD-like_sf"/>
</dbReference>
<dbReference type="InterPro" id="IPR023214">
    <property type="entry name" value="HAD_sf"/>
</dbReference>
<dbReference type="PANTHER" id="PTHR28181:SF1">
    <property type="entry name" value="COLD TOLERANCE PROTEIN 1"/>
    <property type="match status" value="1"/>
</dbReference>
<dbReference type="PANTHER" id="PTHR28181">
    <property type="entry name" value="UPF0655 PROTEIN YCR015C"/>
    <property type="match status" value="1"/>
</dbReference>
<dbReference type="SUPFAM" id="SSF56784">
    <property type="entry name" value="HAD-like"/>
    <property type="match status" value="1"/>
</dbReference>
<feature type="chain" id="PRO_0000202562" description="Cold tolerance protein 1">
    <location>
        <begin position="1"/>
        <end position="317"/>
    </location>
</feature>